<protein>
    <recommendedName>
        <fullName>REST corepressor 2</fullName>
    </recommendedName>
    <alternativeName>
        <fullName>M-CoREST</fullName>
    </alternativeName>
</protein>
<feature type="chain" id="PRO_0000226777" description="REST corepressor 2">
    <location>
        <begin position="1"/>
        <end position="523"/>
    </location>
</feature>
<feature type="domain" description="ELM2" evidence="4">
    <location>
        <begin position="44"/>
        <end position="129"/>
    </location>
</feature>
<feature type="domain" description="SANT 1" evidence="5">
    <location>
        <begin position="130"/>
        <end position="181"/>
    </location>
</feature>
<feature type="domain" description="SANT 2" evidence="5">
    <location>
        <begin position="327"/>
        <end position="378"/>
    </location>
</feature>
<feature type="region of interest" description="Disordered" evidence="6">
    <location>
        <begin position="1"/>
        <end position="43"/>
    </location>
</feature>
<feature type="region of interest" description="Disordered" evidence="6">
    <location>
        <begin position="185"/>
        <end position="244"/>
    </location>
</feature>
<feature type="region of interest" description="Disordered" evidence="6">
    <location>
        <begin position="387"/>
        <end position="523"/>
    </location>
</feature>
<feature type="coiled-coil region" evidence="3">
    <location>
        <begin position="283"/>
        <end position="314"/>
    </location>
</feature>
<feature type="compositionally biased region" description="Basic and acidic residues" evidence="6">
    <location>
        <begin position="30"/>
        <end position="43"/>
    </location>
</feature>
<feature type="compositionally biased region" description="Pro residues" evidence="6">
    <location>
        <begin position="432"/>
        <end position="459"/>
    </location>
</feature>
<feature type="compositionally biased region" description="Low complexity" evidence="6">
    <location>
        <begin position="460"/>
        <end position="482"/>
    </location>
</feature>
<feature type="compositionally biased region" description="Pro residues" evidence="6">
    <location>
        <begin position="504"/>
        <end position="523"/>
    </location>
</feature>
<feature type="modified residue" description="Phosphoserine" evidence="2">
    <location>
        <position position="31"/>
    </location>
</feature>
<feature type="modified residue" description="Phosphoserine" evidence="2">
    <location>
        <position position="35"/>
    </location>
</feature>
<feature type="modified residue" description="Phosphoserine" evidence="2">
    <location>
        <position position="36"/>
    </location>
</feature>
<feature type="modified residue" description="Phosphoserine" evidence="9">
    <location>
        <position position="63"/>
    </location>
</feature>
<feature type="modified residue" description="Phosphoserine" evidence="1">
    <location>
        <position position="202"/>
    </location>
</feature>
<feature type="modified residue" description="Asymmetric dimethylarginine" evidence="10">
    <location>
        <position position="479"/>
    </location>
</feature>
<feature type="cross-link" description="Glycyl lysine isopeptide (Lys-Gly) (interchain with G-Cter in SUMO2)" evidence="2">
    <location>
        <position position="88"/>
    </location>
</feature>
<dbReference type="EMBL" id="AK052295">
    <property type="protein sequence ID" value="BAC34922.1"/>
    <property type="molecule type" value="mRNA"/>
</dbReference>
<dbReference type="EMBL" id="BC055719">
    <property type="protein sequence ID" value="AAH55719.1"/>
    <property type="molecule type" value="mRNA"/>
</dbReference>
<dbReference type="EMBL" id="X83587">
    <property type="protein sequence ID" value="CAB93943.1"/>
    <property type="status" value="ALT_INIT"/>
    <property type="molecule type" value="mRNA"/>
</dbReference>
<dbReference type="CCDS" id="CCDS29522.2"/>
<dbReference type="RefSeq" id="NP_001307483.1">
    <property type="nucleotide sequence ID" value="NM_001320554.1"/>
</dbReference>
<dbReference type="RefSeq" id="NP_473389.2">
    <property type="nucleotide sequence ID" value="NM_054048.4"/>
</dbReference>
<dbReference type="SMR" id="Q8C796"/>
<dbReference type="BioGRID" id="222597">
    <property type="interactions" value="31"/>
</dbReference>
<dbReference type="DIP" id="DIP-59754N"/>
<dbReference type="FunCoup" id="Q8C796">
    <property type="interactions" value="742"/>
</dbReference>
<dbReference type="IntAct" id="Q8C796">
    <property type="interactions" value="7"/>
</dbReference>
<dbReference type="MINT" id="Q8C796"/>
<dbReference type="STRING" id="10090.ENSMUSP00000063335"/>
<dbReference type="iPTMnet" id="Q8C796"/>
<dbReference type="PhosphoSitePlus" id="Q8C796"/>
<dbReference type="jPOST" id="Q8C796"/>
<dbReference type="PaxDb" id="10090-ENSMUSP00000063335"/>
<dbReference type="PeptideAtlas" id="Q8C796"/>
<dbReference type="ProteomicsDB" id="253187"/>
<dbReference type="Antibodypedia" id="15236">
    <property type="antibodies" value="103 antibodies from 23 providers"/>
</dbReference>
<dbReference type="DNASU" id="104383"/>
<dbReference type="Ensembl" id="ENSMUST00000066646.12">
    <property type="protein sequence ID" value="ENSMUSP00000063335.5"/>
    <property type="gene ID" value="ENSMUSG00000024968.15"/>
</dbReference>
<dbReference type="GeneID" id="104383"/>
<dbReference type="KEGG" id="mmu:104383"/>
<dbReference type="UCSC" id="uc008gkn.1">
    <property type="organism name" value="mouse"/>
</dbReference>
<dbReference type="AGR" id="MGI:1859854"/>
<dbReference type="CTD" id="283248"/>
<dbReference type="MGI" id="MGI:1859854">
    <property type="gene designation" value="Rcor2"/>
</dbReference>
<dbReference type="VEuPathDB" id="HostDB:ENSMUSG00000024968"/>
<dbReference type="eggNOG" id="KOG1194">
    <property type="taxonomic scope" value="Eukaryota"/>
</dbReference>
<dbReference type="GeneTree" id="ENSGT00940000154196"/>
<dbReference type="InParanoid" id="Q8C796"/>
<dbReference type="OMA" id="CIKQINS"/>
<dbReference type="OrthoDB" id="10064338at2759"/>
<dbReference type="PhylomeDB" id="Q8C796"/>
<dbReference type="TreeFam" id="TF106450"/>
<dbReference type="BioGRID-ORCS" id="104383">
    <property type="hits" value="4 hits in 65 CRISPR screens"/>
</dbReference>
<dbReference type="ChiTaRS" id="Rcor2">
    <property type="organism name" value="mouse"/>
</dbReference>
<dbReference type="PRO" id="PR:Q8C796"/>
<dbReference type="Proteomes" id="UP000000589">
    <property type="component" value="Chromosome 19"/>
</dbReference>
<dbReference type="RNAct" id="Q8C796">
    <property type="molecule type" value="protein"/>
</dbReference>
<dbReference type="Bgee" id="ENSMUSG00000024968">
    <property type="expression patterns" value="Expressed in ventricular zone and 154 other cell types or tissues"/>
</dbReference>
<dbReference type="ExpressionAtlas" id="Q8C796">
    <property type="expression patterns" value="baseline and differential"/>
</dbReference>
<dbReference type="GO" id="GO:0005634">
    <property type="term" value="C:nucleus"/>
    <property type="evidence" value="ECO:0000314"/>
    <property type="project" value="MGI"/>
</dbReference>
<dbReference type="GO" id="GO:0019899">
    <property type="term" value="F:enzyme binding"/>
    <property type="evidence" value="ECO:0000353"/>
    <property type="project" value="MGI"/>
</dbReference>
<dbReference type="GO" id="GO:0003714">
    <property type="term" value="F:transcription corepressor activity"/>
    <property type="evidence" value="ECO:0000314"/>
    <property type="project" value="MGI"/>
</dbReference>
<dbReference type="GO" id="GO:0045892">
    <property type="term" value="P:negative regulation of DNA-templated transcription"/>
    <property type="evidence" value="ECO:0000314"/>
    <property type="project" value="MGI"/>
</dbReference>
<dbReference type="CDD" id="cd00167">
    <property type="entry name" value="SANT"/>
    <property type="match status" value="1"/>
</dbReference>
<dbReference type="FunFam" id="1.20.58.1880:FF:000001">
    <property type="entry name" value="REST corepressor 1"/>
    <property type="match status" value="1"/>
</dbReference>
<dbReference type="FunFam" id="1.10.10.60:FF:000033">
    <property type="entry name" value="REST corepressor 3"/>
    <property type="match status" value="1"/>
</dbReference>
<dbReference type="FunFam" id="4.10.1240.50:FF:000002">
    <property type="entry name" value="REST corepressor isoform X1"/>
    <property type="match status" value="1"/>
</dbReference>
<dbReference type="Gene3D" id="1.20.58.1880">
    <property type="match status" value="1"/>
</dbReference>
<dbReference type="Gene3D" id="4.10.1240.50">
    <property type="match status" value="1"/>
</dbReference>
<dbReference type="Gene3D" id="1.10.10.60">
    <property type="entry name" value="Homeodomain-like"/>
    <property type="match status" value="1"/>
</dbReference>
<dbReference type="InterPro" id="IPR000949">
    <property type="entry name" value="ELM2_dom"/>
</dbReference>
<dbReference type="InterPro" id="IPR009057">
    <property type="entry name" value="Homeodomain-like_sf"/>
</dbReference>
<dbReference type="InterPro" id="IPR049048">
    <property type="entry name" value="REST_helical"/>
</dbReference>
<dbReference type="InterPro" id="IPR001005">
    <property type="entry name" value="SANT/Myb"/>
</dbReference>
<dbReference type="InterPro" id="IPR017884">
    <property type="entry name" value="SANT_dom"/>
</dbReference>
<dbReference type="InterPro" id="IPR051066">
    <property type="entry name" value="Trans_reg/Corepressor"/>
</dbReference>
<dbReference type="PANTHER" id="PTHR16089:SF12">
    <property type="entry name" value="REST COREPRESSOR 2"/>
    <property type="match status" value="1"/>
</dbReference>
<dbReference type="PANTHER" id="PTHR16089">
    <property type="entry name" value="REST COREPRESSOR COREST PROTEIN-RELATED"/>
    <property type="match status" value="1"/>
</dbReference>
<dbReference type="Pfam" id="PF01448">
    <property type="entry name" value="ELM2"/>
    <property type="match status" value="1"/>
</dbReference>
<dbReference type="Pfam" id="PF00249">
    <property type="entry name" value="Myb_DNA-binding"/>
    <property type="match status" value="1"/>
</dbReference>
<dbReference type="Pfam" id="PF20878">
    <property type="entry name" value="REST_helical"/>
    <property type="match status" value="1"/>
</dbReference>
<dbReference type="SMART" id="SM01189">
    <property type="entry name" value="ELM2"/>
    <property type="match status" value="1"/>
</dbReference>
<dbReference type="SMART" id="SM00717">
    <property type="entry name" value="SANT"/>
    <property type="match status" value="2"/>
</dbReference>
<dbReference type="SUPFAM" id="SSF46689">
    <property type="entry name" value="Homeodomain-like"/>
    <property type="match status" value="2"/>
</dbReference>
<dbReference type="PROSITE" id="PS51156">
    <property type="entry name" value="ELM2"/>
    <property type="match status" value="1"/>
</dbReference>
<dbReference type="PROSITE" id="PS51293">
    <property type="entry name" value="SANT"/>
    <property type="match status" value="2"/>
</dbReference>
<reference key="1">
    <citation type="journal article" date="2005" name="Science">
        <title>The transcriptional landscape of the mammalian genome.</title>
        <authorList>
            <person name="Carninci P."/>
            <person name="Kasukawa T."/>
            <person name="Katayama S."/>
            <person name="Gough J."/>
            <person name="Frith M.C."/>
            <person name="Maeda N."/>
            <person name="Oyama R."/>
            <person name="Ravasi T."/>
            <person name="Lenhard B."/>
            <person name="Wells C."/>
            <person name="Kodzius R."/>
            <person name="Shimokawa K."/>
            <person name="Bajic V.B."/>
            <person name="Brenner S.E."/>
            <person name="Batalov S."/>
            <person name="Forrest A.R."/>
            <person name="Zavolan M."/>
            <person name="Davis M.J."/>
            <person name="Wilming L.G."/>
            <person name="Aidinis V."/>
            <person name="Allen J.E."/>
            <person name="Ambesi-Impiombato A."/>
            <person name="Apweiler R."/>
            <person name="Aturaliya R.N."/>
            <person name="Bailey T.L."/>
            <person name="Bansal M."/>
            <person name="Baxter L."/>
            <person name="Beisel K.W."/>
            <person name="Bersano T."/>
            <person name="Bono H."/>
            <person name="Chalk A.M."/>
            <person name="Chiu K.P."/>
            <person name="Choudhary V."/>
            <person name="Christoffels A."/>
            <person name="Clutterbuck D.R."/>
            <person name="Crowe M.L."/>
            <person name="Dalla E."/>
            <person name="Dalrymple B.P."/>
            <person name="de Bono B."/>
            <person name="Della Gatta G."/>
            <person name="di Bernardo D."/>
            <person name="Down T."/>
            <person name="Engstrom P."/>
            <person name="Fagiolini M."/>
            <person name="Faulkner G."/>
            <person name="Fletcher C.F."/>
            <person name="Fukushima T."/>
            <person name="Furuno M."/>
            <person name="Futaki S."/>
            <person name="Gariboldi M."/>
            <person name="Georgii-Hemming P."/>
            <person name="Gingeras T.R."/>
            <person name="Gojobori T."/>
            <person name="Green R.E."/>
            <person name="Gustincich S."/>
            <person name="Harbers M."/>
            <person name="Hayashi Y."/>
            <person name="Hensch T.K."/>
            <person name="Hirokawa N."/>
            <person name="Hill D."/>
            <person name="Huminiecki L."/>
            <person name="Iacono M."/>
            <person name="Ikeo K."/>
            <person name="Iwama A."/>
            <person name="Ishikawa T."/>
            <person name="Jakt M."/>
            <person name="Kanapin A."/>
            <person name="Katoh M."/>
            <person name="Kawasawa Y."/>
            <person name="Kelso J."/>
            <person name="Kitamura H."/>
            <person name="Kitano H."/>
            <person name="Kollias G."/>
            <person name="Krishnan S.P."/>
            <person name="Kruger A."/>
            <person name="Kummerfeld S.K."/>
            <person name="Kurochkin I.V."/>
            <person name="Lareau L.F."/>
            <person name="Lazarevic D."/>
            <person name="Lipovich L."/>
            <person name="Liu J."/>
            <person name="Liuni S."/>
            <person name="McWilliam S."/>
            <person name="Madan Babu M."/>
            <person name="Madera M."/>
            <person name="Marchionni L."/>
            <person name="Matsuda H."/>
            <person name="Matsuzawa S."/>
            <person name="Miki H."/>
            <person name="Mignone F."/>
            <person name="Miyake S."/>
            <person name="Morris K."/>
            <person name="Mottagui-Tabar S."/>
            <person name="Mulder N."/>
            <person name="Nakano N."/>
            <person name="Nakauchi H."/>
            <person name="Ng P."/>
            <person name="Nilsson R."/>
            <person name="Nishiguchi S."/>
            <person name="Nishikawa S."/>
            <person name="Nori F."/>
            <person name="Ohara O."/>
            <person name="Okazaki Y."/>
            <person name="Orlando V."/>
            <person name="Pang K.C."/>
            <person name="Pavan W.J."/>
            <person name="Pavesi G."/>
            <person name="Pesole G."/>
            <person name="Petrovsky N."/>
            <person name="Piazza S."/>
            <person name="Reed J."/>
            <person name="Reid J.F."/>
            <person name="Ring B.Z."/>
            <person name="Ringwald M."/>
            <person name="Rost B."/>
            <person name="Ruan Y."/>
            <person name="Salzberg S.L."/>
            <person name="Sandelin A."/>
            <person name="Schneider C."/>
            <person name="Schoenbach C."/>
            <person name="Sekiguchi K."/>
            <person name="Semple C.A."/>
            <person name="Seno S."/>
            <person name="Sessa L."/>
            <person name="Sheng Y."/>
            <person name="Shibata Y."/>
            <person name="Shimada H."/>
            <person name="Shimada K."/>
            <person name="Silva D."/>
            <person name="Sinclair B."/>
            <person name="Sperling S."/>
            <person name="Stupka E."/>
            <person name="Sugiura K."/>
            <person name="Sultana R."/>
            <person name="Takenaka Y."/>
            <person name="Taki K."/>
            <person name="Tammoja K."/>
            <person name="Tan S.L."/>
            <person name="Tang S."/>
            <person name="Taylor M.S."/>
            <person name="Tegner J."/>
            <person name="Teichmann S.A."/>
            <person name="Ueda H.R."/>
            <person name="van Nimwegen E."/>
            <person name="Verardo R."/>
            <person name="Wei C.L."/>
            <person name="Yagi K."/>
            <person name="Yamanishi H."/>
            <person name="Zabarovsky E."/>
            <person name="Zhu S."/>
            <person name="Zimmer A."/>
            <person name="Hide W."/>
            <person name="Bult C."/>
            <person name="Grimmond S.M."/>
            <person name="Teasdale R.D."/>
            <person name="Liu E.T."/>
            <person name="Brusic V."/>
            <person name="Quackenbush J."/>
            <person name="Wahlestedt C."/>
            <person name="Mattick J.S."/>
            <person name="Hume D.A."/>
            <person name="Kai C."/>
            <person name="Sasaki D."/>
            <person name="Tomaru Y."/>
            <person name="Fukuda S."/>
            <person name="Kanamori-Katayama M."/>
            <person name="Suzuki M."/>
            <person name="Aoki J."/>
            <person name="Arakawa T."/>
            <person name="Iida J."/>
            <person name="Imamura K."/>
            <person name="Itoh M."/>
            <person name="Kato T."/>
            <person name="Kawaji H."/>
            <person name="Kawagashira N."/>
            <person name="Kawashima T."/>
            <person name="Kojima M."/>
            <person name="Kondo S."/>
            <person name="Konno H."/>
            <person name="Nakano K."/>
            <person name="Ninomiya N."/>
            <person name="Nishio T."/>
            <person name="Okada M."/>
            <person name="Plessy C."/>
            <person name="Shibata K."/>
            <person name="Shiraki T."/>
            <person name="Suzuki S."/>
            <person name="Tagami M."/>
            <person name="Waki K."/>
            <person name="Watahiki A."/>
            <person name="Okamura-Oho Y."/>
            <person name="Suzuki H."/>
            <person name="Kawai J."/>
            <person name="Hayashizaki Y."/>
        </authorList>
    </citation>
    <scope>NUCLEOTIDE SEQUENCE [LARGE SCALE MRNA]</scope>
    <source>
        <strain>C57BL/6J</strain>
        <tissue>Heart</tissue>
    </source>
</reference>
<reference key="2">
    <citation type="journal article" date="2004" name="Genome Res.">
        <title>The status, quality, and expansion of the NIH full-length cDNA project: the Mammalian Gene Collection (MGC).</title>
        <authorList>
            <consortium name="The MGC Project Team"/>
        </authorList>
    </citation>
    <scope>NUCLEOTIDE SEQUENCE [LARGE SCALE MRNA]</scope>
    <source>
        <strain>C57BL/6J</strain>
        <tissue>Brain</tissue>
    </source>
</reference>
<reference key="3">
    <citation type="journal article" date="2001" name="Mech. Dev.">
        <title>Identification and localization of M-CoREST (1A13), a mouse homologue of the human transcriptional co-repressor CoREST, in the developing mouse CNS.</title>
        <authorList>
            <person name="Tontsch S."/>
            <person name="Zach O."/>
            <person name="Bauer H.-C."/>
        </authorList>
    </citation>
    <scope>NUCLEOTIDE SEQUENCE [MRNA] OF 42-523</scope>
    <scope>TISSUE SPECIFICITY</scope>
    <scope>DEVELOPMENTAL STAGE</scope>
</reference>
<reference key="4">
    <citation type="journal article" date="2010" name="Cell">
        <title>A tissue-specific atlas of mouse protein phosphorylation and expression.</title>
        <authorList>
            <person name="Huttlin E.L."/>
            <person name="Jedrychowski M.P."/>
            <person name="Elias J.E."/>
            <person name="Goswami T."/>
            <person name="Rad R."/>
            <person name="Beausoleil S.A."/>
            <person name="Villen J."/>
            <person name="Haas W."/>
            <person name="Sowa M.E."/>
            <person name="Gygi S.P."/>
        </authorList>
    </citation>
    <scope>PHOSPHORYLATION [LARGE SCALE ANALYSIS] AT SER-63</scope>
    <scope>IDENTIFICATION BY MASS SPECTROMETRY [LARGE SCALE ANALYSIS]</scope>
    <source>
        <tissue>Testis</tissue>
    </source>
</reference>
<reference key="5">
    <citation type="journal article" date="2014" name="Mol. Cell. Proteomics">
        <title>Immunoaffinity enrichment and mass spectrometry analysis of protein methylation.</title>
        <authorList>
            <person name="Guo A."/>
            <person name="Gu H."/>
            <person name="Zhou J."/>
            <person name="Mulhern D."/>
            <person name="Wang Y."/>
            <person name="Lee K.A."/>
            <person name="Yang V."/>
            <person name="Aguiar M."/>
            <person name="Kornhauser J."/>
            <person name="Jia X."/>
            <person name="Ren J."/>
            <person name="Beausoleil S.A."/>
            <person name="Silva J.C."/>
            <person name="Vemulapalli V."/>
            <person name="Bedford M.T."/>
            <person name="Comb M.J."/>
        </authorList>
    </citation>
    <scope>METHYLATION [LARGE SCALE ANALYSIS] AT ARG-479</scope>
    <scope>IDENTIFICATION BY MASS SPECTROMETRY [LARGE SCALE ANALYSIS]</scope>
    <source>
        <tissue>Embryo</tissue>
    </source>
</reference>
<name>RCOR2_MOUSE</name>
<organism>
    <name type="scientific">Mus musculus</name>
    <name type="common">Mouse</name>
    <dbReference type="NCBI Taxonomy" id="10090"/>
    <lineage>
        <taxon>Eukaryota</taxon>
        <taxon>Metazoa</taxon>
        <taxon>Chordata</taxon>
        <taxon>Craniata</taxon>
        <taxon>Vertebrata</taxon>
        <taxon>Euteleostomi</taxon>
        <taxon>Mammalia</taxon>
        <taxon>Eutheria</taxon>
        <taxon>Euarchontoglires</taxon>
        <taxon>Glires</taxon>
        <taxon>Rodentia</taxon>
        <taxon>Myomorpha</taxon>
        <taxon>Muroidea</taxon>
        <taxon>Muridae</taxon>
        <taxon>Murinae</taxon>
        <taxon>Mus</taxon>
        <taxon>Mus</taxon>
    </lineage>
</organism>
<keyword id="KW-0175">Coiled coil</keyword>
<keyword id="KW-1017">Isopeptide bond</keyword>
<keyword id="KW-0488">Methylation</keyword>
<keyword id="KW-0539">Nucleus</keyword>
<keyword id="KW-0597">Phosphoprotein</keyword>
<keyword id="KW-1185">Reference proteome</keyword>
<keyword id="KW-0677">Repeat</keyword>
<keyword id="KW-0678">Repressor</keyword>
<keyword id="KW-0804">Transcription</keyword>
<keyword id="KW-0805">Transcription regulation</keyword>
<keyword id="KW-0832">Ubl conjugation</keyword>
<proteinExistence type="evidence at protein level"/>
<gene>
    <name type="primary">Rcor2</name>
</gene>
<accession>Q8C796</accession>
<accession>Q9JMK4</accession>
<comment type="function">
    <text evidence="8">May act as a component of a corepressor complex that represses transcription.</text>
</comment>
<comment type="interaction">
    <interactant intactId="EBI-3043949">
        <id>Q8C796</id>
    </interactant>
    <interactant intactId="EBI-302251">
        <id>P70288</id>
        <label>Hdac2</label>
    </interactant>
    <organismsDiffer>false</organismsDiffer>
    <experiments>2</experiments>
</comment>
<comment type="subcellular location">
    <subcellularLocation>
        <location evidence="4 5">Nucleus</location>
    </subcellularLocation>
</comment>
<comment type="tissue specificity">
    <text evidence="7">Predominantly, but not exclusively, expressed in neural tissue. Strongly expressed in neural domains of the developing brain of the developing mouse CNS.</text>
</comment>
<comment type="developmental stage">
    <text evidence="7">During early development (7 dpc to 8.5 dpc), it is uniformly distributed, with a higher expression in the presumptive neural tissue (head region) while it is not expressed in the heart. From 9 dpc on, it becomes increasingly restricted to the developing brain and spinal cord. With the exception of the floor plate, it is expressed in many cell clusters in the neural tube at that stage. Expressed in dorsal root ganglia and in the neural retina (sensory layer of the retina) of embryos from 11 dpc on throughout development. During mid-gestation, it is particularly expressed in neural tissue thereby shifting to the intermediate and distal layers of the expanding intraneural domains. From late gestational stages on, pronounced expression is detectable only in selected areas of the brain such as the retrospinal cortex. Expressed in neural cell layers in the hypothalamic region at postnatal day 5. In adult brains, it is expressed in many neural cells of the differentiated cortex. Expression is also observed in non-neural tissue such as the developing limbs where it becomes restricted to the interdigital areas. Strongly expressed in the odontoblast layer of the developing teeth and the maxillary bone. In the cerebellum, it is already expressed before the lobules form. At 14 dpc, it is uniformly distributed in the cerebellar rudiment. When lobulation becomes evident, expression is detectable only in the proliferating granule cells of the outermost layer (external granular layer).</text>
</comment>
<comment type="similarity">
    <text evidence="8">Belongs to the CoREST family.</text>
</comment>
<comment type="sequence caution" evidence="8">
    <conflict type="erroneous initiation">
        <sequence resource="EMBL-CDS" id="CAB93943"/>
    </conflict>
</comment>
<evidence type="ECO:0000250" key="1">
    <source>
        <dbReference type="UniProtKB" id="Q5FWT8"/>
    </source>
</evidence>
<evidence type="ECO:0000250" key="2">
    <source>
        <dbReference type="UniProtKB" id="Q8IZ40"/>
    </source>
</evidence>
<evidence type="ECO:0000255" key="3"/>
<evidence type="ECO:0000255" key="4">
    <source>
        <dbReference type="PROSITE-ProRule" id="PRU00512"/>
    </source>
</evidence>
<evidence type="ECO:0000255" key="5">
    <source>
        <dbReference type="PROSITE-ProRule" id="PRU00624"/>
    </source>
</evidence>
<evidence type="ECO:0000256" key="6">
    <source>
        <dbReference type="SAM" id="MobiDB-lite"/>
    </source>
</evidence>
<evidence type="ECO:0000269" key="7">
    <source>
    </source>
</evidence>
<evidence type="ECO:0000305" key="8"/>
<evidence type="ECO:0007744" key="9">
    <source>
    </source>
</evidence>
<evidence type="ECO:0007744" key="10">
    <source>
    </source>
</evidence>
<sequence>MPSVMEKPSAGSGILSRSRAKTAPNGGQPHSEDDSSEEEHSHDSMIRVGTNYQAVIPECKPESPARYSNKELKGMLVWSPNHCVSDAKLDKYIAMAKEKHGYNIEQALGMLLWHKHDVEKSLADLANFTPFPDEWTVEDKVLFEQAFGFHGKCFQRIQQMLPDKVIPSLVKYYYSWKKTRSRTSVMDRQARRLGGRKDKEDSDELEEGRGAVSEGEPDTGDPKREPLPSRPLNARPGPGKKEVQISQYRHHPLRTRRRPPKGMYLSPEGLTAVSGSPDLANLTLRGLDSQLISLKRQVQSMKQTNSSLRQALEGGIDPLRPPEANTKFNSRWTTDEQLLAVQAIRRYGKDFGAIAEVIGNKTLTQVKTFFVSYRRRFNLEEVLQEWEAEQDGAPAAPVPTEEARRGAPVPATALEEDDEVQITSVSTSVPRSVPPAPPPPPPPTSLSQPPPLLRPPLPTAPTLLRQPPPLQQGRFLQPRLAPNQPPPPLIRPALAASRHSARPGPQPPPTLVGAPLEPPAPSL</sequence>